<protein>
    <recommendedName>
        <fullName evidence="4">Alanine--glyoxylate aminotransferase</fullName>
        <shortName>AGT</shortName>
        <ecNumber evidence="4">2.6.1.44</ecNumber>
    </recommendedName>
    <alternativeName>
        <fullName evidence="3">Serine--pyruvate aminotransferase, mitochondrial</fullName>
        <shortName>SPT</shortName>
        <ecNumber evidence="3">2.6.1.51</ecNumber>
    </alternativeName>
</protein>
<dbReference type="EC" id="2.6.1.44" evidence="4"/>
<dbReference type="EC" id="2.6.1.51" evidence="3"/>
<dbReference type="EMBL" id="M84414">
    <property type="protein sequence ID" value="AAA35397.1"/>
    <property type="molecule type" value="mRNA"/>
</dbReference>
<dbReference type="PIR" id="S24154">
    <property type="entry name" value="S24154"/>
</dbReference>
<dbReference type="RefSeq" id="XP_002750020.2">
    <property type="nucleotide sequence ID" value="XM_002749974.3"/>
</dbReference>
<dbReference type="SMR" id="P31029"/>
<dbReference type="FunCoup" id="P31029">
    <property type="interactions" value="833"/>
</dbReference>
<dbReference type="STRING" id="9483.ENSCJAP00000059831"/>
<dbReference type="GeneID" id="100390388"/>
<dbReference type="KEGG" id="cjc:100390388"/>
<dbReference type="CTD" id="189"/>
<dbReference type="eggNOG" id="KOG2862">
    <property type="taxonomic scope" value="Eukaryota"/>
</dbReference>
<dbReference type="HOGENOM" id="CLU_027686_0_0_1"/>
<dbReference type="InParanoid" id="P31029"/>
<dbReference type="OrthoDB" id="7403325at2759"/>
<dbReference type="TreeFam" id="TF313234"/>
<dbReference type="Proteomes" id="UP000008225">
    <property type="component" value="Chromosome 6"/>
</dbReference>
<dbReference type="Bgee" id="ENSCJAG00000006403">
    <property type="expression patterns" value="Expressed in liver and 4 other cell types or tissues"/>
</dbReference>
<dbReference type="GO" id="GO:0005759">
    <property type="term" value="C:mitochondrial matrix"/>
    <property type="evidence" value="ECO:0007669"/>
    <property type="project" value="UniProtKB-SubCell"/>
</dbReference>
<dbReference type="GO" id="GO:0005777">
    <property type="term" value="C:peroxisome"/>
    <property type="evidence" value="ECO:0000250"/>
    <property type="project" value="UniProtKB"/>
</dbReference>
<dbReference type="GO" id="GO:0008453">
    <property type="term" value="F:alanine-glyoxylate transaminase activity"/>
    <property type="evidence" value="ECO:0000250"/>
    <property type="project" value="UniProtKB"/>
</dbReference>
<dbReference type="GO" id="GO:0004760">
    <property type="term" value="F:L-serine-pyruvate transaminase activity"/>
    <property type="evidence" value="ECO:0007669"/>
    <property type="project" value="UniProtKB-EC"/>
</dbReference>
<dbReference type="GO" id="GO:0042803">
    <property type="term" value="F:protein homodimerization activity"/>
    <property type="evidence" value="ECO:0000250"/>
    <property type="project" value="UniProtKB"/>
</dbReference>
<dbReference type="GO" id="GO:0019265">
    <property type="term" value="P:glycine biosynthetic process, by transamination of glyoxylate"/>
    <property type="evidence" value="ECO:0007669"/>
    <property type="project" value="TreeGrafter"/>
</dbReference>
<dbReference type="GO" id="GO:0046487">
    <property type="term" value="P:glyoxylate metabolic process"/>
    <property type="evidence" value="ECO:0000250"/>
    <property type="project" value="UniProtKB"/>
</dbReference>
<dbReference type="CDD" id="cd06451">
    <property type="entry name" value="AGAT_like"/>
    <property type="match status" value="1"/>
</dbReference>
<dbReference type="FunFam" id="3.90.1150.10:FF:000393">
    <property type="entry name" value="Serine--pyruvate aminotransferase"/>
    <property type="match status" value="1"/>
</dbReference>
<dbReference type="FunFam" id="3.40.640.10:FF:000027">
    <property type="entry name" value="Serine--pyruvate aminotransferase, mitochondrial"/>
    <property type="match status" value="1"/>
</dbReference>
<dbReference type="Gene3D" id="3.90.1150.10">
    <property type="entry name" value="Aspartate Aminotransferase, domain 1"/>
    <property type="match status" value="1"/>
</dbReference>
<dbReference type="Gene3D" id="3.40.640.10">
    <property type="entry name" value="Type I PLP-dependent aspartate aminotransferase-like (Major domain)"/>
    <property type="match status" value="1"/>
</dbReference>
<dbReference type="InterPro" id="IPR000192">
    <property type="entry name" value="Aminotrans_V_dom"/>
</dbReference>
<dbReference type="InterPro" id="IPR020578">
    <property type="entry name" value="Aminotrans_V_PyrdxlP_BS"/>
</dbReference>
<dbReference type="InterPro" id="IPR015424">
    <property type="entry name" value="PyrdxlP-dep_Trfase"/>
</dbReference>
<dbReference type="InterPro" id="IPR015421">
    <property type="entry name" value="PyrdxlP-dep_Trfase_major"/>
</dbReference>
<dbReference type="InterPro" id="IPR015422">
    <property type="entry name" value="PyrdxlP-dep_Trfase_small"/>
</dbReference>
<dbReference type="InterPro" id="IPR024169">
    <property type="entry name" value="SP_NH2Trfase/AEP_transaminase"/>
</dbReference>
<dbReference type="PANTHER" id="PTHR21152:SF40">
    <property type="entry name" value="ALANINE--GLYOXYLATE AMINOTRANSFERASE"/>
    <property type="match status" value="1"/>
</dbReference>
<dbReference type="PANTHER" id="PTHR21152">
    <property type="entry name" value="AMINOTRANSFERASE CLASS V"/>
    <property type="match status" value="1"/>
</dbReference>
<dbReference type="Pfam" id="PF00266">
    <property type="entry name" value="Aminotran_5"/>
    <property type="match status" value="1"/>
</dbReference>
<dbReference type="PIRSF" id="PIRSF000524">
    <property type="entry name" value="SPT"/>
    <property type="match status" value="1"/>
</dbReference>
<dbReference type="SUPFAM" id="SSF53383">
    <property type="entry name" value="PLP-dependent transferases"/>
    <property type="match status" value="1"/>
</dbReference>
<dbReference type="PROSITE" id="PS00595">
    <property type="entry name" value="AA_TRANSFER_CLASS_5"/>
    <property type="match status" value="1"/>
</dbReference>
<reference key="1">
    <citation type="journal article" date="1992" name="Eur. J. Biochem.">
        <title>Molecular evolution of alanine/glyoxylate aminotransferase 1 intracellular targeting. Analysis of the marmoset and rabbit genes.</title>
        <authorList>
            <person name="Purdue P.E."/>
            <person name="Lumb M.J."/>
            <person name="Danpure C.J."/>
        </authorList>
    </citation>
    <scope>NUCLEOTIDE SEQUENCE [MRNA]</scope>
    <scope>SUBCELLULAR LOCATION</scope>
</reference>
<keyword id="KW-0007">Acetylation</keyword>
<keyword id="KW-0024">Alternative initiation</keyword>
<keyword id="KW-0032">Aminotransferase</keyword>
<keyword id="KW-0496">Mitochondrion</keyword>
<keyword id="KW-0576">Peroxisome</keyword>
<keyword id="KW-0663">Pyridoxal phosphate</keyword>
<keyword id="KW-1185">Reference proteome</keyword>
<keyword id="KW-0808">Transferase</keyword>
<keyword id="KW-0809">Transit peptide</keyword>
<gene>
    <name evidence="4" type="primary">AGXT</name>
    <name type="synonym">AGT1</name>
</gene>
<sequence>MFQALAKASAALGPRAAGWVRTMASHQLLVAPPKALLKPLSIPTRLLLGPGPSNLPPRTMAAGGLQMLGHMHKETYQIMDEIKEGIQYVFQTRNPLTLVISGSGHCALEAALINVLEPGDSFLVGVNGIWGQRAADIGERLGARVHPMTKDPGGHYTLQEVEEGLAQHKPVLLFLTHGESSSGVLQPLDGFGELCHRYKCLLLVDSVASLGGAPLYMDQQGIDILYSGSQKVLNAPPGTSLLSFSDTAKNKIYSRKTKPSSFYLDVKYLANLWGCDGQPRMYHHTTPVVSLYSLREGLALLSEQGLENSWRKHREAAAYLHGRLQALGLRLFVKDPALRLPTVTTVAVPTGYDWRDIVSYLIERFGIEITGGLGPSTGKVLRIGLMGCNATRENVDLVTEALREALQHCPKKKL</sequence>
<organism>
    <name type="scientific">Callithrix jacchus</name>
    <name type="common">White-tufted-ear marmoset</name>
    <dbReference type="NCBI Taxonomy" id="9483"/>
    <lineage>
        <taxon>Eukaryota</taxon>
        <taxon>Metazoa</taxon>
        <taxon>Chordata</taxon>
        <taxon>Craniata</taxon>
        <taxon>Vertebrata</taxon>
        <taxon>Euteleostomi</taxon>
        <taxon>Mammalia</taxon>
        <taxon>Eutheria</taxon>
        <taxon>Euarchontoglires</taxon>
        <taxon>Primates</taxon>
        <taxon>Haplorrhini</taxon>
        <taxon>Platyrrhini</taxon>
        <taxon>Cebidae</taxon>
        <taxon>Callitrichinae</taxon>
        <taxon>Callithrix</taxon>
        <taxon>Callithrix</taxon>
    </lineage>
</organism>
<name>AGT1_CALJA</name>
<comment type="function">
    <molecule>Isoform Peroxisomal</molecule>
    <text evidence="4">Catalyzes the transamination of glyoxylate to glycine and contributes to the glyoxylate detoxification.</text>
</comment>
<comment type="function">
    <molecule>Isoform Mitochondrial</molecule>
    <text evidence="3">Catalyzes the transamination between L-serine and pyruvate and weakly contributes to gluconeogenesis from the L-serine metabolism.</text>
</comment>
<comment type="catalytic activity">
    <molecule>Isoform Mitochondrial</molecule>
    <reaction evidence="3">
        <text>L-serine + pyruvate = 3-hydroxypyruvate + L-alanine</text>
        <dbReference type="Rhea" id="RHEA:22852"/>
        <dbReference type="ChEBI" id="CHEBI:15361"/>
        <dbReference type="ChEBI" id="CHEBI:17180"/>
        <dbReference type="ChEBI" id="CHEBI:33384"/>
        <dbReference type="ChEBI" id="CHEBI:57972"/>
        <dbReference type="EC" id="2.6.1.51"/>
    </reaction>
    <physiologicalReaction direction="left-to-right" evidence="3">
        <dbReference type="Rhea" id="RHEA:22853"/>
    </physiologicalReaction>
</comment>
<comment type="catalytic activity">
    <molecule>Isoform Peroxisomal</molecule>
    <reaction evidence="4">
        <text>glyoxylate + L-alanine = glycine + pyruvate</text>
        <dbReference type="Rhea" id="RHEA:24248"/>
        <dbReference type="ChEBI" id="CHEBI:15361"/>
        <dbReference type="ChEBI" id="CHEBI:36655"/>
        <dbReference type="ChEBI" id="CHEBI:57305"/>
        <dbReference type="ChEBI" id="CHEBI:57972"/>
        <dbReference type="EC" id="2.6.1.44"/>
    </reaction>
    <physiologicalReaction direction="left-to-right" evidence="4">
        <dbReference type="Rhea" id="RHEA:24249"/>
    </physiologicalReaction>
</comment>
<comment type="cofactor">
    <cofactor evidence="4">
        <name>pyridoxal 5'-phosphate</name>
        <dbReference type="ChEBI" id="CHEBI:597326"/>
    </cofactor>
</comment>
<comment type="subunit">
    <text evidence="4">Homodimer.</text>
</comment>
<comment type="subcellular location">
    <molecule>Isoform Peroxisomal</molecule>
    <subcellularLocation>
        <location evidence="7">Peroxisome</location>
    </subcellularLocation>
</comment>
<comment type="subcellular location">
    <molecule>Isoform Mitochondrial</molecule>
    <subcellularLocation>
        <location evidence="7">Mitochondrion matrix</location>
    </subcellularLocation>
</comment>
<comment type="alternative products">
    <event type="alternative initiation"/>
    <isoform>
        <id>P31029-1</id>
        <name evidence="5">Mitochondrial</name>
        <sequence type="displayed"/>
    </isoform>
    <isoform>
        <id>P31029-2</id>
        <name evidence="5">Peroxisomal</name>
        <sequence type="described" ref="VSP_018642"/>
    </isoform>
</comment>
<comment type="similarity">
    <text evidence="6">Belongs to the class-V pyridoxal-phosphate-dependent aminotransferase family.</text>
</comment>
<comment type="caution">
    <text evidence="6">The intracellular compartmentalization of AGTX in mammalian hepatocytes is species dependent. In human and rabbit, AGTX is peroxisomal. In new world monkeys (marmoset) and rodents (rat and mouse), it is distributed approximately evenly between peroxisomes and mitochondria. In carnivores, like cat, the great majority of the enzyme is mitochondrial with only a small proportion being peroxisomal.</text>
</comment>
<feature type="transit peptide" description="Mitochondrion">
    <location>
        <begin position="1"/>
        <end position="23"/>
    </location>
</feature>
<feature type="chain" id="PRO_0000001284" description="Alanine--glyoxylate aminotransferase">
    <location>
        <begin position="24"/>
        <end position="414"/>
    </location>
</feature>
<feature type="binding site" evidence="1">
    <location>
        <position position="382"/>
    </location>
    <ligand>
        <name>substrate</name>
    </ligand>
</feature>
<feature type="modified residue" description="N6-(pyridoxal phosphate)lysine" evidence="1">
    <location>
        <position position="231"/>
    </location>
</feature>
<feature type="modified residue" description="N6-acetyllysine" evidence="2">
    <location>
        <position position="256"/>
    </location>
</feature>
<feature type="modified residue" description="N6-acetyllysine" evidence="2">
    <location>
        <position position="334"/>
    </location>
</feature>
<feature type="splice variant" id="VSP_018642" description="In isoform Peroxisomal." evidence="6">
    <location>
        <begin position="1"/>
        <end position="22"/>
    </location>
</feature>
<accession>P31029</accession>
<evidence type="ECO:0000250" key="1"/>
<evidence type="ECO:0000250" key="2">
    <source>
        <dbReference type="UniProtKB" id="O35423"/>
    </source>
</evidence>
<evidence type="ECO:0000250" key="3">
    <source>
        <dbReference type="UniProtKB" id="P09139"/>
    </source>
</evidence>
<evidence type="ECO:0000250" key="4">
    <source>
        <dbReference type="UniProtKB" id="P21549"/>
    </source>
</evidence>
<evidence type="ECO:0000303" key="5">
    <source>
    </source>
</evidence>
<evidence type="ECO:0000305" key="6"/>
<evidence type="ECO:0000305" key="7">
    <source>
    </source>
</evidence>
<proteinExistence type="evidence at transcript level"/>